<name>B3GN4_HUMAN</name>
<proteinExistence type="evidence at protein level"/>
<protein>
    <recommendedName>
        <fullName>N-acetyllactosaminide beta-1,3-N-acetylglucosaminyltransferase 4</fullName>
        <ecNumber evidence="4">2.4.1.149</ecNumber>
    </recommendedName>
    <alternativeName>
        <fullName>UDP-GlcNAc:betaGal beta-1,3-N-acetylglucosaminyltransferase 4</fullName>
        <shortName>BGnT-4</shortName>
        <shortName>Beta-1,3-Gn-T4</shortName>
        <shortName>Beta-1,3-N-acetylglucosaminyltransferase 4</shortName>
        <shortName>Beta3Gn-T4</shortName>
    </alternativeName>
</protein>
<feature type="chain" id="PRO_0000289207" description="N-acetyllactosaminide beta-1,3-N-acetylglucosaminyltransferase 4">
    <location>
        <begin position="1"/>
        <end position="378"/>
    </location>
</feature>
<feature type="topological domain" description="Cytoplasmic" evidence="2">
    <location>
        <begin position="1"/>
        <end position="28"/>
    </location>
</feature>
<feature type="transmembrane region" description="Helical; Signal-anchor for type II membrane protein" evidence="2">
    <location>
        <begin position="29"/>
        <end position="49"/>
    </location>
</feature>
<feature type="topological domain" description="Lumenal" evidence="2">
    <location>
        <begin position="50"/>
        <end position="378"/>
    </location>
</feature>
<feature type="region of interest" description="Disordered" evidence="3">
    <location>
        <begin position="59"/>
        <end position="81"/>
    </location>
</feature>
<feature type="glycosylation site" description="N-linked (GlcNAc...) asparagine" evidence="2">
    <location>
        <position position="192"/>
    </location>
</feature>
<feature type="splice variant" id="VSP_025962" description="In isoform 2." evidence="6">
    <location>
        <begin position="1"/>
        <end position="25"/>
    </location>
</feature>
<feature type="sequence variant" id="VAR_032600" description="In dbSNP:rs7136356." evidence="5">
    <original>P</original>
    <variation>A</variation>
    <location>
        <position position="6"/>
    </location>
</feature>
<feature type="sequence variant" id="VAR_032601" description="In dbSNP:rs1001178.">
    <original>S</original>
    <variation>T</variation>
    <location>
        <position position="83"/>
    </location>
</feature>
<feature type="sequence variant" id="VAR_032602" description="In dbSNP:rs35203505.">
    <original>L</original>
    <variation>P</variation>
    <location>
        <position position="87"/>
    </location>
</feature>
<feature type="sequence conflict" description="In Ref. 6; CAC45045 and 7; CAC82375." evidence="7" ref="6 7">
    <original>L</original>
    <variation>V</variation>
    <location>
        <position position="49"/>
    </location>
</feature>
<feature type="sequence conflict" description="In Ref. 6; CAC45045 and 7; CAC82375." evidence="7" ref="6 7">
    <original>A</original>
    <variation>T</variation>
    <location>
        <position position="52"/>
    </location>
</feature>
<feature type="sequence conflict" description="In Ref. 6; CAC45045." evidence="7" ref="6">
    <original>T</original>
    <variation>S</variation>
    <location>
        <position position="81"/>
    </location>
</feature>
<feature type="sequence conflict" description="In Ref. 3; BAC04622." evidence="7" ref="3">
    <original>R</original>
    <variation>Q</variation>
    <location>
        <position position="151"/>
    </location>
</feature>
<evidence type="ECO:0000250" key="1"/>
<evidence type="ECO:0000255" key="2"/>
<evidence type="ECO:0000256" key="3">
    <source>
        <dbReference type="SAM" id="MobiDB-lite"/>
    </source>
</evidence>
<evidence type="ECO:0000269" key="4">
    <source>
    </source>
</evidence>
<evidence type="ECO:0000269" key="5">
    <source>
    </source>
</evidence>
<evidence type="ECO:0000303" key="6">
    <source>
    </source>
</evidence>
<evidence type="ECO:0000305" key="7"/>
<reference key="1">
    <citation type="journal article" date="2001" name="J. Biol. Chem.">
        <title>Identification and characterization of three novel beta 1,3-N-acetylglucosaminyltransferases structurally related to the beta 1,3-galactosyltransferase family.</title>
        <authorList>
            <person name="Shiraishi N."/>
            <person name="Natsume A."/>
            <person name="Togayachi A."/>
            <person name="Endo T."/>
            <person name="Akashima T."/>
            <person name="Yamada Y."/>
            <person name="Imai N."/>
            <person name="Nakagawa S."/>
            <person name="Koizumi S."/>
            <person name="Sekine S."/>
            <person name="Narimatsu H."/>
            <person name="Sasaki K."/>
        </authorList>
    </citation>
    <scope>NUCLEOTIDE SEQUENCE [MRNA] (ISOFORM 1)</scope>
    <scope>TISSUE SPECIFICITY</scope>
    <scope>CATALYTIC ACTIVITY</scope>
    <scope>FUNCTION</scope>
</reference>
<reference key="2">
    <citation type="journal article" date="2003" name="Genome Res.">
        <title>The secreted protein discovery initiative (SPDI), a large-scale effort to identify novel human secreted and transmembrane proteins: a bioinformatics assessment.</title>
        <authorList>
            <person name="Clark H.F."/>
            <person name="Gurney A.L."/>
            <person name="Abaya E."/>
            <person name="Baker K."/>
            <person name="Baldwin D.T."/>
            <person name="Brush J."/>
            <person name="Chen J."/>
            <person name="Chow B."/>
            <person name="Chui C."/>
            <person name="Crowley C."/>
            <person name="Currell B."/>
            <person name="Deuel B."/>
            <person name="Dowd P."/>
            <person name="Eaton D."/>
            <person name="Foster J.S."/>
            <person name="Grimaldi C."/>
            <person name="Gu Q."/>
            <person name="Hass P.E."/>
            <person name="Heldens S."/>
            <person name="Huang A."/>
            <person name="Kim H.S."/>
            <person name="Klimowski L."/>
            <person name="Jin Y."/>
            <person name="Johnson S."/>
            <person name="Lee J."/>
            <person name="Lewis L."/>
            <person name="Liao D."/>
            <person name="Mark M.R."/>
            <person name="Robbie E."/>
            <person name="Sanchez C."/>
            <person name="Schoenfeld J."/>
            <person name="Seshagiri S."/>
            <person name="Simmons L."/>
            <person name="Singh J."/>
            <person name="Smith V."/>
            <person name="Stinson J."/>
            <person name="Vagts A."/>
            <person name="Vandlen R.L."/>
            <person name="Watanabe C."/>
            <person name="Wieand D."/>
            <person name="Woods K."/>
            <person name="Xie M.-H."/>
            <person name="Yansura D.G."/>
            <person name="Yi S."/>
            <person name="Yu G."/>
            <person name="Yuan J."/>
            <person name="Zhang M."/>
            <person name="Zhang Z."/>
            <person name="Goddard A.D."/>
            <person name="Wood W.I."/>
            <person name="Godowski P.J."/>
            <person name="Gray A.M."/>
        </authorList>
    </citation>
    <scope>NUCLEOTIDE SEQUENCE [LARGE SCALE MRNA] (ISOFORM 1)</scope>
</reference>
<reference key="3">
    <citation type="journal article" date="2004" name="Nat. Genet.">
        <title>Complete sequencing and characterization of 21,243 full-length human cDNAs.</title>
        <authorList>
            <person name="Ota T."/>
            <person name="Suzuki Y."/>
            <person name="Nishikawa T."/>
            <person name="Otsuki T."/>
            <person name="Sugiyama T."/>
            <person name="Irie R."/>
            <person name="Wakamatsu A."/>
            <person name="Hayashi K."/>
            <person name="Sato H."/>
            <person name="Nagai K."/>
            <person name="Kimura K."/>
            <person name="Makita H."/>
            <person name="Sekine M."/>
            <person name="Obayashi M."/>
            <person name="Nishi T."/>
            <person name="Shibahara T."/>
            <person name="Tanaka T."/>
            <person name="Ishii S."/>
            <person name="Yamamoto J."/>
            <person name="Saito K."/>
            <person name="Kawai Y."/>
            <person name="Isono Y."/>
            <person name="Nakamura Y."/>
            <person name="Nagahari K."/>
            <person name="Murakami K."/>
            <person name="Yasuda T."/>
            <person name="Iwayanagi T."/>
            <person name="Wagatsuma M."/>
            <person name="Shiratori A."/>
            <person name="Sudo H."/>
            <person name="Hosoiri T."/>
            <person name="Kaku Y."/>
            <person name="Kodaira H."/>
            <person name="Kondo H."/>
            <person name="Sugawara M."/>
            <person name="Takahashi M."/>
            <person name="Kanda K."/>
            <person name="Yokoi T."/>
            <person name="Furuya T."/>
            <person name="Kikkawa E."/>
            <person name="Omura Y."/>
            <person name="Abe K."/>
            <person name="Kamihara K."/>
            <person name="Katsuta N."/>
            <person name="Sato K."/>
            <person name="Tanikawa M."/>
            <person name="Yamazaki M."/>
            <person name="Ninomiya K."/>
            <person name="Ishibashi T."/>
            <person name="Yamashita H."/>
            <person name="Murakawa K."/>
            <person name="Fujimori K."/>
            <person name="Tanai H."/>
            <person name="Kimata M."/>
            <person name="Watanabe M."/>
            <person name="Hiraoka S."/>
            <person name="Chiba Y."/>
            <person name="Ishida S."/>
            <person name="Ono Y."/>
            <person name="Takiguchi S."/>
            <person name="Watanabe S."/>
            <person name="Yosida M."/>
            <person name="Hotuta T."/>
            <person name="Kusano J."/>
            <person name="Kanehori K."/>
            <person name="Takahashi-Fujii A."/>
            <person name="Hara H."/>
            <person name="Tanase T.-O."/>
            <person name="Nomura Y."/>
            <person name="Togiya S."/>
            <person name="Komai F."/>
            <person name="Hara R."/>
            <person name="Takeuchi K."/>
            <person name="Arita M."/>
            <person name="Imose N."/>
            <person name="Musashino K."/>
            <person name="Yuuki H."/>
            <person name="Oshima A."/>
            <person name="Sasaki N."/>
            <person name="Aotsuka S."/>
            <person name="Yoshikawa Y."/>
            <person name="Matsunawa H."/>
            <person name="Ichihara T."/>
            <person name="Shiohata N."/>
            <person name="Sano S."/>
            <person name="Moriya S."/>
            <person name="Momiyama H."/>
            <person name="Satoh N."/>
            <person name="Takami S."/>
            <person name="Terashima Y."/>
            <person name="Suzuki O."/>
            <person name="Nakagawa S."/>
            <person name="Senoh A."/>
            <person name="Mizoguchi H."/>
            <person name="Goto Y."/>
            <person name="Shimizu F."/>
            <person name="Wakebe H."/>
            <person name="Hishigaki H."/>
            <person name="Watanabe T."/>
            <person name="Sugiyama A."/>
            <person name="Takemoto M."/>
            <person name="Kawakami B."/>
            <person name="Yamazaki M."/>
            <person name="Watanabe K."/>
            <person name="Kumagai A."/>
            <person name="Itakura S."/>
            <person name="Fukuzumi Y."/>
            <person name="Fujimori Y."/>
            <person name="Komiyama M."/>
            <person name="Tashiro H."/>
            <person name="Tanigami A."/>
            <person name="Fujiwara T."/>
            <person name="Ono T."/>
            <person name="Yamada K."/>
            <person name="Fujii Y."/>
            <person name="Ozaki K."/>
            <person name="Hirao M."/>
            <person name="Ohmori Y."/>
            <person name="Kawabata A."/>
            <person name="Hikiji T."/>
            <person name="Kobatake N."/>
            <person name="Inagaki H."/>
            <person name="Ikema Y."/>
            <person name="Okamoto S."/>
            <person name="Okitani R."/>
            <person name="Kawakami T."/>
            <person name="Noguchi S."/>
            <person name="Itoh T."/>
            <person name="Shigeta K."/>
            <person name="Senba T."/>
            <person name="Matsumura K."/>
            <person name="Nakajima Y."/>
            <person name="Mizuno T."/>
            <person name="Morinaga M."/>
            <person name="Sasaki M."/>
            <person name="Togashi T."/>
            <person name="Oyama M."/>
            <person name="Hata H."/>
            <person name="Watanabe M."/>
            <person name="Komatsu T."/>
            <person name="Mizushima-Sugano J."/>
            <person name="Satoh T."/>
            <person name="Shirai Y."/>
            <person name="Takahashi Y."/>
            <person name="Nakagawa K."/>
            <person name="Okumura K."/>
            <person name="Nagase T."/>
            <person name="Nomura N."/>
            <person name="Kikuchi H."/>
            <person name="Masuho Y."/>
            <person name="Yamashita R."/>
            <person name="Nakai K."/>
            <person name="Yada T."/>
            <person name="Nakamura Y."/>
            <person name="Ohara O."/>
            <person name="Isogai T."/>
            <person name="Sugano S."/>
        </authorList>
    </citation>
    <scope>NUCLEOTIDE SEQUENCE [LARGE SCALE MRNA] (ISOFORM 2)</scope>
    <source>
        <tissue>Brain</tissue>
    </source>
</reference>
<reference key="4">
    <citation type="journal article" date="2007" name="BMC Genomics">
        <title>The full-ORF clone resource of the German cDNA consortium.</title>
        <authorList>
            <person name="Bechtel S."/>
            <person name="Rosenfelder H."/>
            <person name="Duda A."/>
            <person name="Schmidt C.P."/>
            <person name="Ernst U."/>
            <person name="Wellenreuther R."/>
            <person name="Mehrle A."/>
            <person name="Schuster C."/>
            <person name="Bahr A."/>
            <person name="Bloecker H."/>
            <person name="Heubner D."/>
            <person name="Hoerlein A."/>
            <person name="Michel G."/>
            <person name="Wedler H."/>
            <person name="Koehrer K."/>
            <person name="Ottenwaelder B."/>
            <person name="Poustka A."/>
            <person name="Wiemann S."/>
            <person name="Schupp I."/>
        </authorList>
    </citation>
    <scope>NUCLEOTIDE SEQUENCE [LARGE SCALE MRNA] (ISOFORM 1)</scope>
    <source>
        <tissue>Brain</tissue>
    </source>
</reference>
<reference key="5">
    <citation type="journal article" date="2004" name="Genome Res.">
        <title>The status, quality, and expansion of the NIH full-length cDNA project: the Mammalian Gene Collection (MGC).</title>
        <authorList>
            <consortium name="The MGC Project Team"/>
        </authorList>
    </citation>
    <scope>NUCLEOTIDE SEQUENCE [LARGE SCALE MRNA]</scope>
    <scope>VARIANT ALA-6</scope>
    <source>
        <tissue>Brain</tissue>
    </source>
</reference>
<reference key="6">
    <citation type="submission" date="2000-11" db="EMBL/GenBank/DDBJ databases">
        <title>Cloning and expression of a novel human beta-1,3-galactosyltransferase-related gene.</title>
        <authorList>
            <person name="Leu J.H."/>
            <person name="Chou C.M."/>
            <person name="Huang C.J."/>
        </authorList>
    </citation>
    <scope>NUCLEOTIDE SEQUENCE [GENOMIC DNA] OF 25-378</scope>
</reference>
<reference key="7">
    <citation type="journal article" date="1999" name="Biochim. Biophys. Acta">
        <title>Identification and characterization of large galactosyltransferase gene families: galactosyltransferases for all functions.</title>
        <authorList>
            <person name="Amado M."/>
            <person name="Almeida R."/>
            <person name="Schwientek T."/>
            <person name="Clausen H."/>
        </authorList>
    </citation>
    <scope>NUCLEOTIDE SEQUENCE [MRNA] OF 26-378</scope>
</reference>
<reference key="8">
    <citation type="submission" date="2000-09" db="EMBL/GenBank/DDBJ databases">
        <authorList>
            <person name="Bennett E.P."/>
        </authorList>
    </citation>
    <scope>NUCLEOTIDE SEQUENCE [MRNA] OF 26-378</scope>
</reference>
<dbReference type="EC" id="2.4.1.149" evidence="4"/>
<dbReference type="EMBL" id="AB049586">
    <property type="protein sequence ID" value="BAB21532.1"/>
    <property type="molecule type" value="mRNA"/>
</dbReference>
<dbReference type="EMBL" id="AY358940">
    <property type="protein sequence ID" value="AAQ89299.1"/>
    <property type="molecule type" value="mRNA"/>
</dbReference>
<dbReference type="EMBL" id="AK095746">
    <property type="protein sequence ID" value="BAC04622.1"/>
    <property type="molecule type" value="mRNA"/>
</dbReference>
<dbReference type="EMBL" id="AL834452">
    <property type="protein sequence ID" value="CAD39112.2"/>
    <property type="molecule type" value="mRNA"/>
</dbReference>
<dbReference type="EMBL" id="BC031399">
    <property type="protein sequence ID" value="AAH31399.1"/>
    <property type="molecule type" value="mRNA"/>
</dbReference>
<dbReference type="EMBL" id="AF321825">
    <property type="protein sequence ID" value="AAL37219.1"/>
    <property type="status" value="ALT_INIT"/>
    <property type="molecule type" value="Genomic_DNA"/>
</dbReference>
<dbReference type="EMBL" id="AJ130848">
    <property type="protein sequence ID" value="CAC45045.1"/>
    <property type="molecule type" value="mRNA"/>
</dbReference>
<dbReference type="EMBL" id="AJ278962">
    <property type="protein sequence ID" value="CAC82375.1"/>
    <property type="molecule type" value="mRNA"/>
</dbReference>
<dbReference type="CCDS" id="CCDS81751.1">
    <molecule id="Q9C0J1-2"/>
</dbReference>
<dbReference type="CCDS" id="CCDS9227.1">
    <molecule id="Q9C0J1-1"/>
</dbReference>
<dbReference type="RefSeq" id="NP_001317421.1">
    <molecule id="Q9C0J1-2"/>
    <property type="nucleotide sequence ID" value="NM_001330492.2"/>
</dbReference>
<dbReference type="RefSeq" id="NP_110392.1">
    <molecule id="Q9C0J1-1"/>
    <property type="nucleotide sequence ID" value="NM_030765.4"/>
</dbReference>
<dbReference type="RefSeq" id="XP_047285491.1">
    <molecule id="Q9C0J1-2"/>
    <property type="nucleotide sequence ID" value="XM_047429535.1"/>
</dbReference>
<dbReference type="RefSeq" id="XP_054229180.1">
    <molecule id="Q9C0J1-1"/>
    <property type="nucleotide sequence ID" value="XM_054373205.1"/>
</dbReference>
<dbReference type="RefSeq" id="XP_054229181.1">
    <molecule id="Q9C0J1-2"/>
    <property type="nucleotide sequence ID" value="XM_054373206.1"/>
</dbReference>
<dbReference type="SMR" id="Q9C0J1"/>
<dbReference type="BioGRID" id="122657">
    <property type="interactions" value="8"/>
</dbReference>
<dbReference type="FunCoup" id="Q9C0J1">
    <property type="interactions" value="117"/>
</dbReference>
<dbReference type="IntAct" id="Q9C0J1">
    <property type="interactions" value="4"/>
</dbReference>
<dbReference type="STRING" id="9606.ENSP00000319636"/>
<dbReference type="BindingDB" id="Q9C0J1"/>
<dbReference type="ChEMBL" id="CHEMBL5465353"/>
<dbReference type="CAZy" id="GT31">
    <property type="family name" value="Glycosyltransferase Family 31"/>
</dbReference>
<dbReference type="GlyCosmos" id="Q9C0J1">
    <property type="glycosylation" value="1 site, No reported glycans"/>
</dbReference>
<dbReference type="GlyGen" id="Q9C0J1">
    <property type="glycosylation" value="4 sites, 2 N-linked glycans (2 sites)"/>
</dbReference>
<dbReference type="iPTMnet" id="Q9C0J1"/>
<dbReference type="PhosphoSitePlus" id="Q9C0J1"/>
<dbReference type="BioMuta" id="B3GNT4"/>
<dbReference type="DMDM" id="74752494"/>
<dbReference type="MassIVE" id="Q9C0J1"/>
<dbReference type="PaxDb" id="9606-ENSP00000319636"/>
<dbReference type="PeptideAtlas" id="Q9C0J1"/>
<dbReference type="ProteomicsDB" id="80060">
    <molecule id="Q9C0J1-1"/>
</dbReference>
<dbReference type="ProteomicsDB" id="80061">
    <molecule id="Q9C0J1-2"/>
</dbReference>
<dbReference type="Antibodypedia" id="31630">
    <property type="antibodies" value="90 antibodies from 20 providers"/>
</dbReference>
<dbReference type="DNASU" id="79369"/>
<dbReference type="Ensembl" id="ENST00000324189.5">
    <molecule id="Q9C0J1-1"/>
    <property type="protein sequence ID" value="ENSP00000319636.4"/>
    <property type="gene ID" value="ENSG00000176383.9"/>
</dbReference>
<dbReference type="Ensembl" id="ENST00000535274.1">
    <molecule id="Q9C0J1-2"/>
    <property type="protein sequence ID" value="ENSP00000444534.1"/>
    <property type="gene ID" value="ENSG00000176383.9"/>
</dbReference>
<dbReference type="Ensembl" id="ENST00000546192.1">
    <molecule id="Q9C0J1-2"/>
    <property type="protein sequence ID" value="ENSP00000438840.1"/>
    <property type="gene ID" value="ENSG00000176383.9"/>
</dbReference>
<dbReference type="GeneID" id="79369"/>
<dbReference type="KEGG" id="hsa:79369"/>
<dbReference type="MANE-Select" id="ENST00000324189.5">
    <property type="protein sequence ID" value="ENSP00000319636.4"/>
    <property type="RefSeq nucleotide sequence ID" value="NM_030765.4"/>
    <property type="RefSeq protein sequence ID" value="NP_110392.1"/>
</dbReference>
<dbReference type="UCSC" id="uc001ubx.4">
    <molecule id="Q9C0J1-1"/>
    <property type="organism name" value="human"/>
</dbReference>
<dbReference type="AGR" id="HGNC:15683"/>
<dbReference type="CTD" id="79369"/>
<dbReference type="DisGeNET" id="79369"/>
<dbReference type="GeneCards" id="B3GNT4"/>
<dbReference type="HGNC" id="HGNC:15683">
    <property type="gene designation" value="B3GNT4"/>
</dbReference>
<dbReference type="HPA" id="ENSG00000176383">
    <property type="expression patterns" value="Tissue enhanced (brain, skin)"/>
</dbReference>
<dbReference type="MIM" id="605864">
    <property type="type" value="gene"/>
</dbReference>
<dbReference type="neXtProt" id="NX_Q9C0J1"/>
<dbReference type="OpenTargets" id="ENSG00000176383"/>
<dbReference type="PharmGKB" id="PA25220"/>
<dbReference type="VEuPathDB" id="HostDB:ENSG00000176383"/>
<dbReference type="eggNOG" id="KOG2287">
    <property type="taxonomic scope" value="Eukaryota"/>
</dbReference>
<dbReference type="GeneTree" id="ENSGT00940000162236"/>
<dbReference type="HOGENOM" id="CLU_036849_5_3_1"/>
<dbReference type="InParanoid" id="Q9C0J1"/>
<dbReference type="OMA" id="WDFAEDF"/>
<dbReference type="OrthoDB" id="2139606at2759"/>
<dbReference type="PAN-GO" id="Q9C0J1">
    <property type="GO annotations" value="3 GO annotations based on evolutionary models"/>
</dbReference>
<dbReference type="PhylomeDB" id="Q9C0J1"/>
<dbReference type="TreeFam" id="TF318639"/>
<dbReference type="PathwayCommons" id="Q9C0J1"/>
<dbReference type="Reactome" id="R-HSA-2022854">
    <property type="pathway name" value="Keratan sulfate biosynthesis"/>
</dbReference>
<dbReference type="Reactome" id="R-HSA-913709">
    <property type="pathway name" value="O-linked glycosylation of mucins"/>
</dbReference>
<dbReference type="SignaLink" id="Q9C0J1"/>
<dbReference type="UniPathway" id="UPA00378"/>
<dbReference type="BioGRID-ORCS" id="79369">
    <property type="hits" value="27 hits in 1156 CRISPR screens"/>
</dbReference>
<dbReference type="ChiTaRS" id="B3GNT4">
    <property type="organism name" value="human"/>
</dbReference>
<dbReference type="GenomeRNAi" id="79369"/>
<dbReference type="Pharos" id="Q9C0J1">
    <property type="development level" value="Tbio"/>
</dbReference>
<dbReference type="PRO" id="PR:Q9C0J1"/>
<dbReference type="Proteomes" id="UP000005640">
    <property type="component" value="Chromosome 12"/>
</dbReference>
<dbReference type="RNAct" id="Q9C0J1">
    <property type="molecule type" value="protein"/>
</dbReference>
<dbReference type="Bgee" id="ENSG00000176383">
    <property type="expression patterns" value="Expressed in oocyte and 146 other cell types or tissues"/>
</dbReference>
<dbReference type="ExpressionAtlas" id="Q9C0J1">
    <property type="expression patterns" value="baseline and differential"/>
</dbReference>
<dbReference type="GO" id="GO:0000139">
    <property type="term" value="C:Golgi membrane"/>
    <property type="evidence" value="ECO:0000318"/>
    <property type="project" value="GO_Central"/>
</dbReference>
<dbReference type="GO" id="GO:0008499">
    <property type="term" value="F:N-acetyl-beta-D-glucosaminide beta-(1,3)-galactosyltransferase activity"/>
    <property type="evidence" value="ECO:0000304"/>
    <property type="project" value="Reactome"/>
</dbReference>
<dbReference type="GO" id="GO:0008532">
    <property type="term" value="F:N-acetyllactosaminide beta-1,3-N-acetylglucosaminyltransferase activity"/>
    <property type="evidence" value="ECO:0000314"/>
    <property type="project" value="UniProtKB"/>
</dbReference>
<dbReference type="GO" id="GO:0018146">
    <property type="term" value="P:keratan sulfate proteoglycan biosynthetic process"/>
    <property type="evidence" value="ECO:0000304"/>
    <property type="project" value="Reactome"/>
</dbReference>
<dbReference type="GO" id="GO:0016266">
    <property type="term" value="P:O-glycan processing"/>
    <property type="evidence" value="ECO:0000304"/>
    <property type="project" value="Reactome"/>
</dbReference>
<dbReference type="GO" id="GO:0030311">
    <property type="term" value="P:poly-N-acetyllactosamine biosynthetic process"/>
    <property type="evidence" value="ECO:0000314"/>
    <property type="project" value="UniProtKB"/>
</dbReference>
<dbReference type="GO" id="GO:0006493">
    <property type="term" value="P:protein O-linked glycosylation"/>
    <property type="evidence" value="ECO:0000318"/>
    <property type="project" value="GO_Central"/>
</dbReference>
<dbReference type="FunFam" id="3.90.550.50:FF:000009">
    <property type="entry name" value="Hexosyltransferase"/>
    <property type="match status" value="1"/>
</dbReference>
<dbReference type="Gene3D" id="3.90.550.50">
    <property type="match status" value="1"/>
</dbReference>
<dbReference type="InterPro" id="IPR002659">
    <property type="entry name" value="Glyco_trans_31"/>
</dbReference>
<dbReference type="PANTHER" id="PTHR11214">
    <property type="entry name" value="BETA-1,3-N-ACETYLGLUCOSAMINYLTRANSFERASE"/>
    <property type="match status" value="1"/>
</dbReference>
<dbReference type="PANTHER" id="PTHR11214:SF368">
    <property type="entry name" value="N-ACETYLLACTOSAMINIDE BETA-1,3-N-ACETYLGLUCOSAMINYLTRANSFERASE 4"/>
    <property type="match status" value="1"/>
</dbReference>
<dbReference type="Pfam" id="PF01762">
    <property type="entry name" value="Galactosyl_T"/>
    <property type="match status" value="1"/>
</dbReference>
<organism>
    <name type="scientific">Homo sapiens</name>
    <name type="common">Human</name>
    <dbReference type="NCBI Taxonomy" id="9606"/>
    <lineage>
        <taxon>Eukaryota</taxon>
        <taxon>Metazoa</taxon>
        <taxon>Chordata</taxon>
        <taxon>Craniata</taxon>
        <taxon>Vertebrata</taxon>
        <taxon>Euteleostomi</taxon>
        <taxon>Mammalia</taxon>
        <taxon>Eutheria</taxon>
        <taxon>Euarchontoglires</taxon>
        <taxon>Primates</taxon>
        <taxon>Haplorrhini</taxon>
        <taxon>Catarrhini</taxon>
        <taxon>Hominidae</taxon>
        <taxon>Homo</taxon>
    </lineage>
</organism>
<gene>
    <name type="primary">B3GNT4</name>
    <name type="ORF">UNQ1898/PRO4344</name>
</gene>
<sequence>MLPPQPSAAHQGRGGRSGLLPKGPAMLCRLCWLVSYSLAVLLLGCLLFLRKAAKPAGDPTAHQPFWAPPTPRHSRCPPNHTVSSASLSLPSRHRLFLTYRHCRNFSILLEPSGCSKDTFLLLAIKSQPGHVERRAAIRSTWGRVGGWARGRQLKLVFLLGVAGSAPPAQLLAYESREFDDILQWDFTEDFFNLTLKELHLQRWVVAACPQAHFMLKGDDDVFVHVPNVLEFLDGWDPAQDLLVGDVIRQALPNRNTKVKYFIPPSMYRATHYPPYAGGGGYVMSRATVRRLQAIMEDAELFPIDDVFVGMCLRRLGLSPMHHAGFKTFGIRRPLDPLDPCLYRGLLLVHRLSPLEMWTMWALVTDEGLKCAAGPIPQR</sequence>
<comment type="function">
    <text evidence="4">Beta-1,3-N-acetylglucosaminyltransferase involved in the synthesis of poly-N-acetyllactosamine. Has activity for type 2 oligosaccharides.</text>
</comment>
<comment type="catalytic activity">
    <reaction evidence="4">
        <text>a beta-D-galactosyl-(1-&gt;4)-N-acetyl-beta-D-glucosaminyl derivative + UDP-N-acetyl-alpha-D-glucosamine = an N-acetyl-beta-D-glucosaminyl-(1-&gt;3)-beta-D-galactosyl-(1-&gt;4)-N-acetyl-beta-D-glucosaminyl derivative + UDP + H(+)</text>
        <dbReference type="Rhea" id="RHEA:14389"/>
        <dbReference type="ChEBI" id="CHEBI:15378"/>
        <dbReference type="ChEBI" id="CHEBI:57705"/>
        <dbReference type="ChEBI" id="CHEBI:58223"/>
        <dbReference type="ChEBI" id="CHEBI:133507"/>
        <dbReference type="ChEBI" id="CHEBI:134090"/>
        <dbReference type="EC" id="2.4.1.149"/>
    </reaction>
</comment>
<comment type="pathway">
    <text>Protein modification; protein glycosylation.</text>
</comment>
<comment type="subcellular location">
    <subcellularLocation>
        <location evidence="1">Golgi apparatus membrane</location>
        <topology evidence="1">Single-pass type II membrane protein</topology>
    </subcellularLocation>
</comment>
<comment type="alternative products">
    <event type="alternative splicing"/>
    <isoform>
        <id>Q9C0J1-1</id>
        <name>1</name>
        <sequence type="displayed"/>
    </isoform>
    <isoform>
        <id>Q9C0J1-2</id>
        <name>2</name>
        <sequence type="described" ref="VSP_025962"/>
    </isoform>
</comment>
<comment type="tissue specificity">
    <text evidence="4">Mainly expressed in brain tissues such as whole brain, hippocampus, amygdala, cerebellum and caudate nucleus. Also expressed in colon, esophagus and kidney.</text>
</comment>
<comment type="similarity">
    <text evidence="7">Belongs to the glycosyltransferase 31 family.</text>
</comment>
<comment type="sequence caution" evidence="7">
    <conflict type="erroneous initiation">
        <sequence resource="EMBL-CDS" id="AAL37219"/>
    </conflict>
</comment>
<accession>Q9C0J1</accession>
<accession>Q8N5W4</accession>
<accession>Q8N934</accession>
<accession>Q8ND21</accession>
<accession>Q8WWR5</accession>
<accession>Q8WY02</accession>
<accession>Q96QH5</accession>
<keyword id="KW-0025">Alternative splicing</keyword>
<keyword id="KW-0325">Glycoprotein</keyword>
<keyword id="KW-0328">Glycosyltransferase</keyword>
<keyword id="KW-0333">Golgi apparatus</keyword>
<keyword id="KW-0472">Membrane</keyword>
<keyword id="KW-1267">Proteomics identification</keyword>
<keyword id="KW-1185">Reference proteome</keyword>
<keyword id="KW-0735">Signal-anchor</keyword>
<keyword id="KW-0808">Transferase</keyword>
<keyword id="KW-0812">Transmembrane</keyword>
<keyword id="KW-1133">Transmembrane helix</keyword>